<evidence type="ECO:0000255" key="1"/>
<evidence type="ECO:0000303" key="2">
    <source>
    </source>
</evidence>
<evidence type="ECO:0000305" key="3"/>
<evidence type="ECO:0000305" key="4">
    <source>
    </source>
</evidence>
<reference key="1">
    <citation type="journal article" date="2015" name="Genome Biol. Evol.">
        <title>Molecular diversity and gene evolution of the venom arsenal of Terebridae predatory marine snails.</title>
        <authorList>
            <person name="Gorson J."/>
            <person name="Ramrattan G."/>
            <person name="Verdes A."/>
            <person name="Wright E.M."/>
            <person name="Kantor Y."/>
            <person name="Rajaram Srinivasan R."/>
            <person name="Musunuri R."/>
            <person name="Packer D."/>
            <person name="Albano G."/>
            <person name="Qiu W.G."/>
            <person name="Holford M."/>
        </authorList>
    </citation>
    <scope>NUCLEOTIDE SEQUENCE [MRNA]</scope>
    <source>
        <tissue>Venom duct</tissue>
    </source>
</reference>
<organism>
    <name type="scientific">Terebra anilis</name>
    <name type="common">Auger snail</name>
    <name type="synonym">Cinguloterebra anilis</name>
    <dbReference type="NCBI Taxonomy" id="553697"/>
    <lineage>
        <taxon>Eukaryota</taxon>
        <taxon>Metazoa</taxon>
        <taxon>Spiralia</taxon>
        <taxon>Lophotrochozoa</taxon>
        <taxon>Mollusca</taxon>
        <taxon>Gastropoda</taxon>
        <taxon>Caenogastropoda</taxon>
        <taxon>Neogastropoda</taxon>
        <taxon>Conoidea</taxon>
        <taxon>Terebridae</taxon>
        <taxon>Terebra</taxon>
    </lineage>
</organism>
<proteinExistence type="inferred from homology"/>
<name>TCC_TERAN</name>
<accession>P0DN45</accession>
<feature type="signal peptide" evidence="1">
    <location>
        <begin position="1"/>
        <end position="21"/>
    </location>
</feature>
<feature type="propeptide" id="PRO_0000435054" evidence="3">
    <location>
        <begin position="22"/>
        <end position="28"/>
    </location>
</feature>
<feature type="chain" id="PRO_0000435055" description="Tan_12Cys">
    <location>
        <begin position="29"/>
        <end position="98"/>
    </location>
</feature>
<protein>
    <recommendedName>
        <fullName evidence="2">Tan_12Cys</fullName>
    </recommendedName>
</protein>
<sequence>MNLKVLFLLAMVLVTLCLGEDRVTDRRKFCKCCASCCVSGRNIDGDCPPHGNQQFCHFCNREKVKIKRDCRSNQTAYQHCMEYHIQCASVKNHVCTDQ</sequence>
<dbReference type="GO" id="GO:0005576">
    <property type="term" value="C:extracellular region"/>
    <property type="evidence" value="ECO:0007669"/>
    <property type="project" value="UniProtKB-SubCell"/>
</dbReference>
<dbReference type="GO" id="GO:0090729">
    <property type="term" value="F:toxin activity"/>
    <property type="evidence" value="ECO:0007669"/>
    <property type="project" value="UniProtKB-KW"/>
</dbReference>
<keyword id="KW-0165">Cleavage on pair of basic residues</keyword>
<keyword id="KW-1015">Disulfide bond</keyword>
<keyword id="KW-0964">Secreted</keyword>
<keyword id="KW-0732">Signal</keyword>
<keyword id="KW-0800">Toxin</keyword>
<comment type="subcellular location">
    <subcellularLocation>
        <location evidence="4">Secreted</location>
    </subcellularLocation>
</comment>
<comment type="tissue specificity">
    <text evidence="4">Expressed by the venom duct.</text>
</comment>
<comment type="domain">
    <text>The cysteine framework is C-CC-CC-C-C-C-C-C-C-C.</text>
</comment>
<comment type="PTM">
    <text evidence="3">Contains 6 disulfide bonds.</text>
</comment>
<comment type="similarity">
    <text>Belongs to the teretoxin C (TC) superfamily.</text>
</comment>